<protein>
    <recommendedName>
        <fullName evidence="2">Conotoxin Cl6a</fullName>
    </recommendedName>
    <alternativeName>
        <fullName evidence="3">Cal6.43a</fullName>
    </alternativeName>
</protein>
<sequence length="28" mass="2999">DDCTTYCYGVHCCPPAFKCAASGCVRNN</sequence>
<comment type="subcellular location">
    <subcellularLocation>
        <location>Secreted</location>
    </subcellularLocation>
</comment>
<comment type="tissue specificity">
    <text>Expressed by the venom duct.</text>
</comment>
<comment type="domain">
    <text evidence="1">The presence of a 'disulfide through disulfide knot' structurally defines this protein as a knottin.</text>
</comment>
<comment type="domain">
    <text>The cysteine framework is VI/VII (C-C-CC-C-C).</text>
</comment>
<reference key="1">
    <citation type="journal article" date="2010" name="Mol. Phylogenet. Evol.">
        <title>Evolution of Conus peptide toxins: analysis of Conus californicus Reeve, 1844.</title>
        <authorList>
            <person name="Biggs J.S."/>
            <person name="Watkins M."/>
            <person name="Puillandre N."/>
            <person name="Ownby J.P."/>
            <person name="Lopez-Vera E."/>
            <person name="Christensen S."/>
            <person name="Moreno K.J."/>
            <person name="Bernaldez J."/>
            <person name="Licea-Navarro A."/>
            <person name="Corneli P.S."/>
            <person name="Olivera B.M."/>
        </authorList>
    </citation>
    <scope>PROTEIN SEQUENCE</scope>
    <source>
        <tissue>Venom</tissue>
    </source>
</reference>
<proteinExistence type="evidence at protein level"/>
<organism>
    <name type="scientific">Californiconus californicus</name>
    <name type="common">California cone</name>
    <name type="synonym">Conus californicus</name>
    <dbReference type="NCBI Taxonomy" id="1736779"/>
    <lineage>
        <taxon>Eukaryota</taxon>
        <taxon>Metazoa</taxon>
        <taxon>Spiralia</taxon>
        <taxon>Lophotrochozoa</taxon>
        <taxon>Mollusca</taxon>
        <taxon>Gastropoda</taxon>
        <taxon>Caenogastropoda</taxon>
        <taxon>Neogastropoda</taxon>
        <taxon>Conoidea</taxon>
        <taxon>Conidae</taxon>
        <taxon>Californiconus</taxon>
    </lineage>
</organism>
<accession>P0DJB8</accession>
<name>U6A_CONCL</name>
<evidence type="ECO:0000250" key="1"/>
<evidence type="ECO:0000303" key="2">
    <source>
    </source>
</evidence>
<evidence type="ECO:0000305" key="3"/>
<feature type="peptide" id="PRO_0000415054" description="Conotoxin Cl6a">
    <location>
        <begin position="1"/>
        <end position="28"/>
    </location>
</feature>
<feature type="disulfide bond" evidence="1">
    <location>
        <begin position="3"/>
        <end position="13"/>
    </location>
</feature>
<feature type="disulfide bond" evidence="1">
    <location>
        <begin position="7"/>
        <end position="19"/>
    </location>
</feature>
<feature type="disulfide bond" evidence="1">
    <location>
        <begin position="12"/>
        <end position="24"/>
    </location>
</feature>
<feature type="unsure residue" description="N or D">
    <location>
        <position position="28"/>
    </location>
</feature>
<dbReference type="GO" id="GO:0005576">
    <property type="term" value="C:extracellular region"/>
    <property type="evidence" value="ECO:0007669"/>
    <property type="project" value="UniProtKB-SubCell"/>
</dbReference>
<dbReference type="GO" id="GO:0090729">
    <property type="term" value="F:toxin activity"/>
    <property type="evidence" value="ECO:0007669"/>
    <property type="project" value="UniProtKB-KW"/>
</dbReference>
<keyword id="KW-0903">Direct protein sequencing</keyword>
<keyword id="KW-1015">Disulfide bond</keyword>
<keyword id="KW-0960">Knottin</keyword>
<keyword id="KW-0528">Neurotoxin</keyword>
<keyword id="KW-0964">Secreted</keyword>
<keyword id="KW-0800">Toxin</keyword>